<proteinExistence type="evidence at transcript level"/>
<evidence type="ECO:0000250" key="1"/>
<evidence type="ECO:0000255" key="2"/>
<evidence type="ECO:0000305" key="3"/>
<feature type="chain" id="PRO_0000391594" description="Casparian strip membrane protein 3">
    <location>
        <begin position="1"/>
        <end position="186"/>
    </location>
</feature>
<feature type="topological domain" description="Cytoplasmic" evidence="2">
    <location>
        <begin position="1"/>
        <end position="26"/>
    </location>
</feature>
<feature type="transmembrane region" description="Helical" evidence="2">
    <location>
        <begin position="27"/>
        <end position="47"/>
    </location>
</feature>
<feature type="topological domain" description="Extracellular" evidence="2">
    <location>
        <begin position="48"/>
        <end position="74"/>
    </location>
</feature>
<feature type="transmembrane region" description="Helical" evidence="2">
    <location>
        <begin position="75"/>
        <end position="95"/>
    </location>
</feature>
<feature type="topological domain" description="Cytoplasmic" evidence="2">
    <location>
        <begin position="96"/>
        <end position="107"/>
    </location>
</feature>
<feature type="transmembrane region" description="Helical" evidence="2">
    <location>
        <begin position="108"/>
        <end position="128"/>
    </location>
</feature>
<feature type="topological domain" description="Extracellular" evidence="2">
    <location>
        <begin position="129"/>
        <end position="161"/>
    </location>
</feature>
<feature type="transmembrane region" description="Helical" evidence="2">
    <location>
        <begin position="162"/>
        <end position="182"/>
    </location>
</feature>
<feature type="topological domain" description="Cytoplasmic" evidence="2">
    <location>
        <begin position="183"/>
        <end position="186"/>
    </location>
</feature>
<feature type="glycosylation site" description="N-linked (GlcNAc...) asparagine" evidence="2">
    <location>
        <position position="51"/>
    </location>
</feature>
<gene>
    <name type="ordered locus">Sb10g008220</name>
</gene>
<accession>C5Z7E3</accession>
<dbReference type="EMBL" id="CM000769">
    <property type="protein sequence ID" value="EER88126.1"/>
    <property type="molecule type" value="Genomic_DNA"/>
</dbReference>
<dbReference type="SMR" id="C5Z7E3"/>
<dbReference type="FunCoup" id="C5Z7E3">
    <property type="interactions" value="2128"/>
</dbReference>
<dbReference type="STRING" id="4558.C5Z7E3"/>
<dbReference type="KEGG" id="sbi:8065532"/>
<dbReference type="eggNOG" id="ENOG502RXTK">
    <property type="taxonomic scope" value="Eukaryota"/>
</dbReference>
<dbReference type="HOGENOM" id="CLU_066104_3_2_1"/>
<dbReference type="InParanoid" id="C5Z7E3"/>
<dbReference type="OrthoDB" id="753675at2759"/>
<dbReference type="Proteomes" id="UP000000768">
    <property type="component" value="Chromosome 10"/>
</dbReference>
<dbReference type="ExpressionAtlas" id="C5Z7E3">
    <property type="expression patterns" value="baseline and differential"/>
</dbReference>
<dbReference type="GO" id="GO:0005886">
    <property type="term" value="C:plasma membrane"/>
    <property type="evidence" value="ECO:0007669"/>
    <property type="project" value="UniProtKB-SubCell"/>
</dbReference>
<dbReference type="GO" id="GO:0071555">
    <property type="term" value="P:cell wall organization"/>
    <property type="evidence" value="ECO:0007669"/>
    <property type="project" value="UniProtKB-KW"/>
</dbReference>
<dbReference type="InterPro" id="IPR006459">
    <property type="entry name" value="CASP/CASPL"/>
</dbReference>
<dbReference type="InterPro" id="IPR006702">
    <property type="entry name" value="CASP_dom"/>
</dbReference>
<dbReference type="InterPro" id="IPR044173">
    <property type="entry name" value="CASPL"/>
</dbReference>
<dbReference type="NCBIfam" id="TIGR01569">
    <property type="entry name" value="A_tha_TIGR01569"/>
    <property type="match status" value="1"/>
</dbReference>
<dbReference type="PANTHER" id="PTHR36488:SF12">
    <property type="entry name" value="CASP-LIKE PROTEIN"/>
    <property type="match status" value="1"/>
</dbReference>
<dbReference type="PANTHER" id="PTHR36488">
    <property type="entry name" value="CASP-LIKE PROTEIN 1U1"/>
    <property type="match status" value="1"/>
</dbReference>
<dbReference type="Pfam" id="PF04535">
    <property type="entry name" value="CASP_dom"/>
    <property type="match status" value="1"/>
</dbReference>
<name>CASP3_SORBI</name>
<keyword id="KW-1003">Cell membrane</keyword>
<keyword id="KW-0961">Cell wall biogenesis/degradation</keyword>
<keyword id="KW-0325">Glycoprotein</keyword>
<keyword id="KW-0472">Membrane</keyword>
<keyword id="KW-1185">Reference proteome</keyword>
<keyword id="KW-0812">Transmembrane</keyword>
<keyword id="KW-1133">Transmembrane helix</keyword>
<reference key="1">
    <citation type="journal article" date="2009" name="Nature">
        <title>The Sorghum bicolor genome and the diversification of grasses.</title>
        <authorList>
            <person name="Paterson A.H."/>
            <person name="Bowers J.E."/>
            <person name="Bruggmann R."/>
            <person name="Dubchak I."/>
            <person name="Grimwood J."/>
            <person name="Gundlach H."/>
            <person name="Haberer G."/>
            <person name="Hellsten U."/>
            <person name="Mitros T."/>
            <person name="Poliakov A."/>
            <person name="Schmutz J."/>
            <person name="Spannagl M."/>
            <person name="Tang H."/>
            <person name="Wang X."/>
            <person name="Wicker T."/>
            <person name="Bharti A.K."/>
            <person name="Chapman J."/>
            <person name="Feltus F.A."/>
            <person name="Gowik U."/>
            <person name="Grigoriev I.V."/>
            <person name="Lyons E."/>
            <person name="Maher C.A."/>
            <person name="Martis M."/>
            <person name="Narechania A."/>
            <person name="Otillar R.P."/>
            <person name="Penning B.W."/>
            <person name="Salamov A.A."/>
            <person name="Wang Y."/>
            <person name="Zhang L."/>
            <person name="Carpita N.C."/>
            <person name="Freeling M."/>
            <person name="Gingle A.R."/>
            <person name="Hash C.T."/>
            <person name="Keller B."/>
            <person name="Klein P."/>
            <person name="Kresovich S."/>
            <person name="McCann M.C."/>
            <person name="Ming R."/>
            <person name="Peterson D.G."/>
            <person name="Mehboob-ur-Rahman M."/>
            <person name="Ware D."/>
            <person name="Westhoff P."/>
            <person name="Mayer K.F.X."/>
            <person name="Messing J."/>
            <person name="Rokhsar D.S."/>
        </authorList>
    </citation>
    <scope>NUCLEOTIDE SEQUENCE [LARGE SCALE GENOMIC DNA]</scope>
    <source>
        <strain>cv. BTx623</strain>
    </source>
</reference>
<reference key="2">
    <citation type="journal article" date="2018" name="Plant J.">
        <title>The Sorghum bicolor reference genome: improved assembly, gene annotations, a transcriptome atlas, and signatures of genome organization.</title>
        <authorList>
            <person name="McCormick R.F."/>
            <person name="Truong S.K."/>
            <person name="Sreedasyam A."/>
            <person name="Jenkins J."/>
            <person name="Shu S."/>
            <person name="Sims D."/>
            <person name="Kennedy M."/>
            <person name="Amirebrahimi M."/>
            <person name="Weers B.D."/>
            <person name="McKinley B."/>
            <person name="Mattison A."/>
            <person name="Morishige D.T."/>
            <person name="Grimwood J."/>
            <person name="Schmutz J."/>
            <person name="Mullet J.E."/>
        </authorList>
    </citation>
    <scope>GENOME REANNOTATION</scope>
    <source>
        <strain>cv. BTx623</strain>
    </source>
</reference>
<reference key="3">
    <citation type="journal article" date="2014" name="Plant Physiol.">
        <title>Functional and evolutionary analysis of the CASPARIAN STRIP MEMBRANE DOMAIN PROTEIN family.</title>
        <authorList>
            <person name="Roppolo D."/>
            <person name="Boeckmann B."/>
            <person name="Pfister A."/>
            <person name="Boutet E."/>
            <person name="Rubio M.C."/>
            <person name="Denervaud-Tendon V."/>
            <person name="Vermeer J.E."/>
            <person name="Gheyselinck J."/>
            <person name="Xenarios I."/>
            <person name="Geldner N."/>
        </authorList>
    </citation>
    <scope>GENE FAMILY</scope>
    <scope>NOMENCLATURE</scope>
</reference>
<comment type="function">
    <text evidence="1">Regulates membrane-cell wall junctions and localized cell wall deposition. Required for establishment of the Casparian strip membrane domain (CSD) and the subsequent formation of Casparian strips, a cell wall modification of the root endodermis that determines an apoplastic barrier between the intraorganismal apoplasm and the extraorganismal apoplasm and prevents lateral diffusion (By similarity).</text>
</comment>
<comment type="subunit">
    <text evidence="1">Homodimer and heterodimers.</text>
</comment>
<comment type="subcellular location">
    <subcellularLocation>
        <location evidence="1">Cell membrane</location>
        <topology evidence="1">Multi-pass membrane protein</topology>
    </subcellularLocation>
    <text evidence="1">Very restricted localization following a belt shape within the plasma membrane which coincides with the position of the Casparian strip membrane domain in the root endodermis.</text>
</comment>
<comment type="similarity">
    <text evidence="3">Belongs to the Casparian strip membrane proteins (CASP) family.</text>
</comment>
<organism>
    <name type="scientific">Sorghum bicolor</name>
    <name type="common">Sorghum</name>
    <name type="synonym">Sorghum vulgare</name>
    <dbReference type="NCBI Taxonomy" id="4558"/>
    <lineage>
        <taxon>Eukaryota</taxon>
        <taxon>Viridiplantae</taxon>
        <taxon>Streptophyta</taxon>
        <taxon>Embryophyta</taxon>
        <taxon>Tracheophyta</taxon>
        <taxon>Spermatophyta</taxon>
        <taxon>Magnoliopsida</taxon>
        <taxon>Liliopsida</taxon>
        <taxon>Poales</taxon>
        <taxon>Poaceae</taxon>
        <taxon>PACMAD clade</taxon>
        <taxon>Panicoideae</taxon>
        <taxon>Andropogonodae</taxon>
        <taxon>Andropogoneae</taxon>
        <taxon>Sorghinae</taxon>
        <taxon>Sorghum</taxon>
    </lineage>
</organism>
<sequence>MKGSSEHGETSKAAPLGRGGVSKGVSVLDLILRFIAIIGTLASAIAMGTTNETLPFFTQFIRFKAQYSDLPTLTFFVVANSIVCAYLILSLPLSIVHIIRSRAKYSRLLLIFLDAAMLALVTAGASAAAAIVYLAHKGNVRANWLAICQQFDSFCERISGSLIGSFGAMVMLILLILLSAIALARR</sequence>
<protein>
    <recommendedName>
        <fullName>Casparian strip membrane protein 3</fullName>
        <shortName>SbCASP3</shortName>
    </recommendedName>
</protein>